<feature type="initiator methionine" description="Removed" evidence="2">
    <location>
        <position position="1"/>
    </location>
</feature>
<feature type="chain" id="PRO_0000179966" description="6-phosphofructo-2-kinase/fructose-2,6-bisphosphatase 2">
    <location>
        <begin position="2"/>
        <end position="557"/>
    </location>
</feature>
<feature type="region of interest" description="Disordered" evidence="7">
    <location>
        <begin position="1"/>
        <end position="21"/>
    </location>
</feature>
<feature type="region of interest" description="6-phosphofructo-2-kinase">
    <location>
        <begin position="2"/>
        <end position="251"/>
    </location>
</feature>
<feature type="region of interest" description="Fructose-2,6-bisphosphatase">
    <location>
        <begin position="252"/>
        <end position="557"/>
    </location>
</feature>
<feature type="region of interest" description="Disordered" evidence="7">
    <location>
        <begin position="449"/>
        <end position="495"/>
    </location>
</feature>
<feature type="compositionally biased region" description="Low complexity" evidence="7">
    <location>
        <begin position="1"/>
        <end position="16"/>
    </location>
</feature>
<feature type="compositionally biased region" description="Polar residues" evidence="7">
    <location>
        <begin position="456"/>
        <end position="479"/>
    </location>
</feature>
<feature type="active site" evidence="6">
    <location>
        <position position="131"/>
    </location>
</feature>
<feature type="active site" evidence="6">
    <location>
        <position position="161"/>
    </location>
</feature>
<feature type="active site" description="Tele-phosphohistidine intermediate" evidence="5">
    <location>
        <position position="260"/>
    </location>
</feature>
<feature type="active site" description="Proton donor/acceptor" evidence="5">
    <location>
        <position position="329"/>
    </location>
</feature>
<feature type="binding site" evidence="5">
    <location>
        <begin position="48"/>
        <end position="56"/>
    </location>
    <ligand>
        <name>ATP</name>
        <dbReference type="ChEBI" id="CHEBI:30616"/>
    </ligand>
</feature>
<feature type="binding site" evidence="5">
    <location>
        <position position="81"/>
    </location>
    <ligand>
        <name>beta-D-fructose 6-phosphate</name>
        <dbReference type="ChEBI" id="CHEBI:57634"/>
    </ligand>
</feature>
<feature type="binding site" evidence="5">
    <location>
        <position position="105"/>
    </location>
    <ligand>
        <name>beta-D-fructose 6-phosphate</name>
        <dbReference type="ChEBI" id="CHEBI:57634"/>
    </ligand>
</feature>
<feature type="binding site" evidence="5">
    <location>
        <position position="133"/>
    </location>
    <ligand>
        <name>beta-D-fructose 6-phosphate</name>
        <dbReference type="ChEBI" id="CHEBI:57634"/>
    </ligand>
</feature>
<feature type="binding site" evidence="5">
    <location>
        <position position="139"/>
    </location>
    <ligand>
        <name>beta-D-fructose 6-phosphate</name>
        <dbReference type="ChEBI" id="CHEBI:57634"/>
    </ligand>
</feature>
<feature type="binding site" evidence="5">
    <location>
        <begin position="170"/>
        <end position="175"/>
    </location>
    <ligand>
        <name>ATP</name>
        <dbReference type="ChEBI" id="CHEBI:30616"/>
    </ligand>
</feature>
<feature type="binding site" evidence="5">
    <location>
        <position position="175"/>
    </location>
    <ligand>
        <name>beta-D-fructose 6-phosphate</name>
        <dbReference type="ChEBI" id="CHEBI:57634"/>
    </ligand>
</feature>
<feature type="binding site" evidence="5">
    <location>
        <position position="196"/>
    </location>
    <ligand>
        <name>beta-D-fructose 6-phosphate</name>
        <dbReference type="ChEBI" id="CHEBI:57634"/>
    </ligand>
</feature>
<feature type="binding site" evidence="5">
    <location>
        <position position="200"/>
    </location>
    <ligand>
        <name>beta-D-fructose 6-phosphate</name>
        <dbReference type="ChEBI" id="CHEBI:57634"/>
    </ligand>
</feature>
<feature type="binding site" evidence="5">
    <location>
        <position position="259"/>
    </location>
    <ligand>
        <name>beta-D-fructose 2,6-bisphosphate</name>
        <dbReference type="ChEBI" id="CHEBI:58579"/>
    </ligand>
</feature>
<feature type="binding site" evidence="5">
    <location>
        <position position="266"/>
    </location>
    <ligand>
        <name>beta-D-fructose 2,6-bisphosphate</name>
        <dbReference type="ChEBI" id="CHEBI:58579"/>
    </ligand>
</feature>
<feature type="binding site" evidence="5">
    <location>
        <position position="272"/>
    </location>
    <ligand>
        <name>beta-D-fructose 2,6-bisphosphate</name>
        <dbReference type="ChEBI" id="CHEBI:58579"/>
    </ligand>
</feature>
<feature type="binding site" evidence="5">
    <location>
        <position position="340"/>
    </location>
    <ligand>
        <name>beta-D-fructose 2,6-bisphosphate</name>
        <dbReference type="ChEBI" id="CHEBI:58579"/>
    </ligand>
</feature>
<feature type="binding site" evidence="3">
    <location>
        <begin position="351"/>
        <end position="354"/>
    </location>
    <ligand>
        <name>ATP</name>
        <dbReference type="ChEBI" id="CHEBI:30616"/>
    </ligand>
</feature>
<feature type="binding site" evidence="5">
    <location>
        <position position="354"/>
    </location>
    <ligand>
        <name>beta-D-fructose 2,6-bisphosphate</name>
        <dbReference type="ChEBI" id="CHEBI:58579"/>
    </ligand>
</feature>
<feature type="binding site" evidence="5">
    <location>
        <position position="358"/>
    </location>
    <ligand>
        <name>beta-D-fructose 2,6-bisphosphate</name>
        <dbReference type="ChEBI" id="CHEBI:58579"/>
    </ligand>
</feature>
<feature type="binding site" evidence="5">
    <location>
        <position position="369"/>
    </location>
    <ligand>
        <name>beta-D-fructose 2,6-bisphosphate</name>
        <dbReference type="ChEBI" id="CHEBI:58579"/>
    </ligand>
</feature>
<feature type="binding site" evidence="3">
    <location>
        <begin position="395"/>
        <end position="399"/>
    </location>
    <ligand>
        <name>ATP</name>
        <dbReference type="ChEBI" id="CHEBI:30616"/>
    </ligand>
</feature>
<feature type="binding site" evidence="5">
    <location>
        <position position="395"/>
    </location>
    <ligand>
        <name>beta-D-fructose 2,6-bisphosphate</name>
        <dbReference type="ChEBI" id="CHEBI:58579"/>
    </ligand>
</feature>
<feature type="binding site" evidence="3">
    <location>
        <position position="399"/>
    </location>
    <ligand>
        <name>beta-D-fructose 2,6-bisphosphate</name>
        <dbReference type="ChEBI" id="CHEBI:58579"/>
    </ligand>
</feature>
<feature type="binding site" evidence="5">
    <location>
        <position position="431"/>
    </location>
    <ligand>
        <name>ATP</name>
        <dbReference type="ChEBI" id="CHEBI:30616"/>
    </ligand>
</feature>
<feature type="site" description="Transition state stabilizer" evidence="5">
    <location>
        <position position="259"/>
    </location>
</feature>
<feature type="site" description="Transition state stabilizer" evidence="5">
    <location>
        <position position="266"/>
    </location>
</feature>
<feature type="site" description="Transition state stabilizer" evidence="5">
    <location>
        <position position="394"/>
    </location>
</feature>
<feature type="modified residue" description="N-acetylserine" evidence="2">
    <location>
        <position position="2"/>
    </location>
</feature>
<feature type="modified residue" description="Phosphoserine; by PKA" evidence="1">
    <location>
        <position position="32"/>
    </location>
</feature>
<feature type="modified residue" description="Phosphoserine" evidence="9">
    <location>
        <position position="469"/>
    </location>
</feature>
<feature type="modified residue" description="Phosphothreonine" evidence="2">
    <location>
        <position position="471"/>
    </location>
</feature>
<feature type="modified residue" description="Phosphothreonine; by PKC" evidence="4">
    <location>
        <position position="478"/>
    </location>
</feature>
<feature type="modified residue" description="Phosphoserine" evidence="9">
    <location>
        <position position="486"/>
    </location>
</feature>
<feature type="modified residue" description="Phosphoserine" evidence="2">
    <location>
        <position position="496"/>
    </location>
</feature>
<feature type="splice variant" id="VSP_004678" description="In isoform 4." evidence="8">
    <location>
        <begin position="454"/>
        <end position="536"/>
    </location>
</feature>
<feature type="splice variant" id="VSP_004676" description="In isoform 2." evidence="8">
    <location>
        <begin position="514"/>
        <end position="536"/>
    </location>
</feature>
<feature type="splice variant" id="VSP_004677" description="In isoform 1." evidence="8">
    <original>QQGSA</original>
    <variation>SIPVV</variation>
    <location>
        <begin position="515"/>
        <end position="519"/>
    </location>
</feature>
<feature type="splice variant" id="VSP_004679" description="In isoform 1." evidence="8">
    <location>
        <begin position="520"/>
        <end position="547"/>
    </location>
</feature>
<comment type="function">
    <text evidence="2">Synthesis and degradation of fructose 2,6-bisphosphate.</text>
</comment>
<comment type="catalytic activity">
    <reaction evidence="2">
        <text>beta-D-fructose 2,6-bisphosphate + H2O = beta-D-fructose 6-phosphate + phosphate</text>
        <dbReference type="Rhea" id="RHEA:17289"/>
        <dbReference type="ChEBI" id="CHEBI:15377"/>
        <dbReference type="ChEBI" id="CHEBI:43474"/>
        <dbReference type="ChEBI" id="CHEBI:57634"/>
        <dbReference type="ChEBI" id="CHEBI:58579"/>
        <dbReference type="EC" id="3.1.3.46"/>
    </reaction>
</comment>
<comment type="catalytic activity">
    <reaction evidence="2">
        <text>beta-D-fructose 6-phosphate + ATP = beta-D-fructose 2,6-bisphosphate + ADP + H(+)</text>
        <dbReference type="Rhea" id="RHEA:15653"/>
        <dbReference type="ChEBI" id="CHEBI:15378"/>
        <dbReference type="ChEBI" id="CHEBI:30616"/>
        <dbReference type="ChEBI" id="CHEBI:57634"/>
        <dbReference type="ChEBI" id="CHEBI:58579"/>
        <dbReference type="ChEBI" id="CHEBI:456216"/>
        <dbReference type="EC" id="2.7.1.105"/>
    </reaction>
</comment>
<comment type="activity regulation">
    <text evidence="2">Phosphorylation results in the activation of the kinase activity.</text>
</comment>
<comment type="subunit">
    <text evidence="2 5">Homodimer (By similarity). Forms a heterodimer with PFKFB3 (By similarity).</text>
</comment>
<comment type="alternative products">
    <event type="alternative splicing"/>
    <isoform>
        <id>Q9JJH5-1</id>
        <name>3</name>
        <sequence type="displayed"/>
    </isoform>
    <isoform>
        <id>Q9JJH5-2</id>
        <name>1</name>
        <sequence type="described" ref="VSP_004677 VSP_004679"/>
    </isoform>
    <isoform>
        <id>Q9JJH5-3</id>
        <name>2</name>
        <sequence type="described" ref="VSP_004676"/>
    </isoform>
    <isoform>
        <id>Q9JJH5-4</id>
        <name>4</name>
        <sequence type="described" ref="VSP_004678"/>
    </isoform>
</comment>
<comment type="PTM">
    <text evidence="2">Phosphorylation by AMPK stimulates activity.</text>
</comment>
<comment type="similarity">
    <text evidence="8">In the C-terminal section; belongs to the phosphoglycerate mutase family.</text>
</comment>
<sequence>MSENSTFSTEDSSSSSYKPHASNLRRAGKKCSWASYMTNSPTLIVMIGLPARGKTYVSKKLTRYLNWIGVPTKVFNLGVYRREAVKSYKSYDFFRHDNEEAMKIRKQCALVALEDVKAYFTEESGQIAVFDATNTTRERRDMILNFAKQNAFKVFFVESVCDDPDVIAANILEVKVSSPDYPERNRENVMEDFLKRIECYKVTYQPLDPDNYDKDLSFIKVMNVGQRFLVNRVQDYIQSKIVYYLMNIHVHPRTIYLCRHGESEFNLLGKIGGDSGLSLRGKQFAQALKKFLEEQEIQDLKVWTSQLKRTIQTAESLGVTYEQWKILNEIDAGVCEEMTYSEIEQRYPEEFALRDQEKYLYRYPGGESYQDLVQRLEPVIMELERQGNVLVISHQAVMRCLLAYFLDKGADELPYLRCPLHIIFKLTPVAYGCKVETITLNVEAVDTHRDKPTHNFPKSQTPVRMRRNSFTPLSSSNTIRRPRNYSVGSRPLKPLSPLRALDMQEGADQPKTQVQQGSAQATEHLQKALEFANGHREVENVLAKHRRPSMASLTLLS</sequence>
<protein>
    <recommendedName>
        <fullName>6-phosphofructo-2-kinase/fructose-2,6-bisphosphatase 2</fullName>
        <shortName>6PF-2-K/Fru-2,6-P2ase 2</shortName>
        <shortName>PFK/FBPase 2</shortName>
    </recommendedName>
    <alternativeName>
        <fullName>6PF-2-K/Fru-2,6-P2ase heart-type isozyme</fullName>
    </alternativeName>
    <alternativeName>
        <fullName>RH2K</fullName>
    </alternativeName>
    <domain>
        <recommendedName>
            <fullName>6-phosphofructo-2-kinase</fullName>
            <ecNumber>2.7.1.105</ecNumber>
        </recommendedName>
    </domain>
    <domain>
        <recommendedName>
            <fullName>Fructose-2,6-bisphosphatase</fullName>
            <ecNumber>3.1.3.46</ecNumber>
        </recommendedName>
    </domain>
</protein>
<evidence type="ECO:0000250" key="1"/>
<evidence type="ECO:0000250" key="2">
    <source>
        <dbReference type="UniProtKB" id="O60825"/>
    </source>
</evidence>
<evidence type="ECO:0000250" key="3">
    <source>
        <dbReference type="UniProtKB" id="P07953"/>
    </source>
</evidence>
<evidence type="ECO:0000250" key="4">
    <source>
        <dbReference type="UniProtKB" id="P26285"/>
    </source>
</evidence>
<evidence type="ECO:0000250" key="5">
    <source>
        <dbReference type="UniProtKB" id="Q16875"/>
    </source>
</evidence>
<evidence type="ECO:0000255" key="6"/>
<evidence type="ECO:0000256" key="7">
    <source>
        <dbReference type="SAM" id="MobiDB-lite"/>
    </source>
</evidence>
<evidence type="ECO:0000305" key="8"/>
<evidence type="ECO:0007744" key="9">
    <source>
    </source>
</evidence>
<dbReference type="EC" id="2.7.1.105"/>
<dbReference type="EC" id="3.1.3.46"/>
<dbReference type="EMBL" id="S67900">
    <property type="protein sequence ID" value="AAB29678.1"/>
    <property type="molecule type" value="mRNA"/>
</dbReference>
<dbReference type="EMBL" id="L27084">
    <property type="protein sequence ID" value="AAA41132.1"/>
    <property type="molecule type" value="mRNA"/>
</dbReference>
<dbReference type="EMBL" id="AB040530">
    <property type="protein sequence ID" value="BAA96495.1"/>
    <property type="molecule type" value="mRNA"/>
</dbReference>
<dbReference type="EMBL" id="AB040531">
    <property type="protein sequence ID" value="BAA96496.1"/>
    <property type="molecule type" value="mRNA"/>
</dbReference>
<dbReference type="EMBL" id="AB040532">
    <property type="protein sequence ID" value="BAA96497.1"/>
    <property type="molecule type" value="mRNA"/>
</dbReference>
<dbReference type="EMBL" id="AB040533">
    <property type="protein sequence ID" value="BAA96498.1"/>
    <property type="molecule type" value="mRNA"/>
</dbReference>
<dbReference type="PIR" id="JC2037">
    <property type="entry name" value="JC2037"/>
</dbReference>
<dbReference type="RefSeq" id="NP_001029136.1">
    <molecule id="Q9JJH5-3"/>
    <property type="nucleotide sequence ID" value="NM_001033964.2"/>
</dbReference>
<dbReference type="RefSeq" id="NP_001029137.1">
    <molecule id="Q9JJH5-1"/>
    <property type="nucleotide sequence ID" value="NM_001033965.2"/>
</dbReference>
<dbReference type="RefSeq" id="NP_001416418.1">
    <molecule id="Q9JJH5-4"/>
    <property type="nucleotide sequence ID" value="NM_001429489.1"/>
</dbReference>
<dbReference type="RefSeq" id="NP_001416419.1">
    <molecule id="Q9JJH5-4"/>
    <property type="nucleotide sequence ID" value="NM_001429490.1"/>
</dbReference>
<dbReference type="RefSeq" id="NP_001416420.1">
    <molecule id="Q9JJH5-4"/>
    <property type="nucleotide sequence ID" value="NM_001429491.1"/>
</dbReference>
<dbReference type="RefSeq" id="NP_536725.2">
    <molecule id="Q9JJH5-4"/>
    <property type="nucleotide sequence ID" value="NM_080477.3"/>
</dbReference>
<dbReference type="RefSeq" id="XP_006249768.1">
    <property type="nucleotide sequence ID" value="XM_006249706.3"/>
</dbReference>
<dbReference type="RefSeq" id="XP_006249769.1">
    <property type="nucleotide sequence ID" value="XM_006249707.3"/>
</dbReference>
<dbReference type="RefSeq" id="XP_006249770.1">
    <property type="nucleotide sequence ID" value="XM_006249708.1"/>
</dbReference>
<dbReference type="RefSeq" id="XP_006249771.1">
    <property type="nucleotide sequence ID" value="XM_006249709.3"/>
</dbReference>
<dbReference type="RefSeq" id="XP_006249773.1">
    <property type="nucleotide sequence ID" value="XM_006249711.3"/>
</dbReference>
<dbReference type="RefSeq" id="XP_063128100.1">
    <molecule id="Q9JJH5-4"/>
    <property type="nucleotide sequence ID" value="XM_063272030.1"/>
</dbReference>
<dbReference type="SMR" id="Q9JJH5"/>
<dbReference type="ComplexPortal" id="CPX-2041">
    <property type="entry name" value="6-phosphofructo-2-kinase/fructose-2,6-biphosphatase 2 complex"/>
</dbReference>
<dbReference type="FunCoup" id="Q9JJH5">
    <property type="interactions" value="2080"/>
</dbReference>
<dbReference type="STRING" id="10116.ENSRNOP00000005729"/>
<dbReference type="iPTMnet" id="Q9JJH5"/>
<dbReference type="PhosphoSitePlus" id="Q9JJH5"/>
<dbReference type="jPOST" id="Q9JJH5"/>
<dbReference type="PaxDb" id="10116-ENSRNOP00000005729"/>
<dbReference type="Ensembl" id="ENSRNOT00000005729.6">
    <molecule id="Q9JJH5-1"/>
    <property type="protein sequence ID" value="ENSRNOP00000005729.3"/>
    <property type="gene ID" value="ENSRNOG00000004162.9"/>
</dbReference>
<dbReference type="Ensembl" id="ENSRNOT00000037679.7">
    <molecule id="Q9JJH5-4"/>
    <property type="protein sequence ID" value="ENSRNOP00000030819.4"/>
    <property type="gene ID" value="ENSRNOG00000004162.9"/>
</dbReference>
<dbReference type="Ensembl" id="ENSRNOT00000117528.1">
    <molecule id="Q9JJH5-3"/>
    <property type="protein sequence ID" value="ENSRNOP00000082431.1"/>
    <property type="gene ID" value="ENSRNOG00000004162.9"/>
</dbReference>
<dbReference type="GeneID" id="24640"/>
<dbReference type="KEGG" id="rno:24640"/>
<dbReference type="UCSC" id="RGD:3309">
    <molecule id="Q9JJH5-1"/>
    <property type="organism name" value="rat"/>
</dbReference>
<dbReference type="AGR" id="RGD:3309"/>
<dbReference type="CTD" id="5208"/>
<dbReference type="RGD" id="3309">
    <property type="gene designation" value="Pfkfb2"/>
</dbReference>
<dbReference type="eggNOG" id="KOG0234">
    <property type="taxonomic scope" value="Eukaryota"/>
</dbReference>
<dbReference type="GeneTree" id="ENSGT00950000182835"/>
<dbReference type="HOGENOM" id="CLU_006383_1_1_1"/>
<dbReference type="InParanoid" id="Q9JJH5"/>
<dbReference type="OMA" id="RWIQERC"/>
<dbReference type="OrthoDB" id="267323at2759"/>
<dbReference type="PhylomeDB" id="Q9JJH5"/>
<dbReference type="TreeFam" id="TF313541"/>
<dbReference type="BRENDA" id="2.7.1.105">
    <property type="organism ID" value="5301"/>
</dbReference>
<dbReference type="BRENDA" id="3.1.3.46">
    <property type="organism ID" value="5301"/>
</dbReference>
<dbReference type="Reactome" id="R-RNO-9634600">
    <property type="pathway name" value="Regulation of glycolysis by fructose 2,6-bisphosphate metabolism"/>
</dbReference>
<dbReference type="SABIO-RK" id="Q9JJH5"/>
<dbReference type="PRO" id="PR:Q9JJH5"/>
<dbReference type="Proteomes" id="UP000002494">
    <property type="component" value="Chromosome 13"/>
</dbReference>
<dbReference type="Bgee" id="ENSRNOG00000004162">
    <property type="expression patterns" value="Expressed in stomach and 19 other cell types or tissues"/>
</dbReference>
<dbReference type="ExpressionAtlas" id="Q9JJH5">
    <property type="expression patterns" value="baseline and differential"/>
</dbReference>
<dbReference type="GO" id="GO:0005829">
    <property type="term" value="C:cytosol"/>
    <property type="evidence" value="ECO:0000318"/>
    <property type="project" value="GO_Central"/>
</dbReference>
<dbReference type="GO" id="GO:0005654">
    <property type="term" value="C:nucleoplasm"/>
    <property type="evidence" value="ECO:0007669"/>
    <property type="project" value="Ensembl"/>
</dbReference>
<dbReference type="GO" id="GO:0003873">
    <property type="term" value="F:6-phosphofructo-2-kinase activity"/>
    <property type="evidence" value="ECO:0000250"/>
    <property type="project" value="UniProtKB"/>
</dbReference>
<dbReference type="GO" id="GO:0005524">
    <property type="term" value="F:ATP binding"/>
    <property type="evidence" value="ECO:0007669"/>
    <property type="project" value="UniProtKB-KW"/>
</dbReference>
<dbReference type="GO" id="GO:0004331">
    <property type="term" value="F:fructose-2,6-bisphosphate 2-phosphatase activity"/>
    <property type="evidence" value="ECO:0000314"/>
    <property type="project" value="CACAO"/>
</dbReference>
<dbReference type="GO" id="GO:0019900">
    <property type="term" value="F:kinase binding"/>
    <property type="evidence" value="ECO:0000353"/>
    <property type="project" value="RGD"/>
</dbReference>
<dbReference type="GO" id="GO:0019901">
    <property type="term" value="F:protein kinase binding"/>
    <property type="evidence" value="ECO:0000266"/>
    <property type="project" value="RGD"/>
</dbReference>
<dbReference type="GO" id="GO:0006003">
    <property type="term" value="P:fructose 2,6-bisphosphate metabolic process"/>
    <property type="evidence" value="ECO:0000318"/>
    <property type="project" value="GO_Central"/>
</dbReference>
<dbReference type="GO" id="GO:0006000">
    <property type="term" value="P:fructose metabolic process"/>
    <property type="evidence" value="ECO:0007669"/>
    <property type="project" value="InterPro"/>
</dbReference>
<dbReference type="GO" id="GO:0006007">
    <property type="term" value="P:glucose catabolic process"/>
    <property type="evidence" value="ECO:0000314"/>
    <property type="project" value="RGD"/>
</dbReference>
<dbReference type="GO" id="GO:0006096">
    <property type="term" value="P:glycolytic process"/>
    <property type="evidence" value="ECO:0000250"/>
    <property type="project" value="UniProtKB"/>
</dbReference>
<dbReference type="GO" id="GO:0006089">
    <property type="term" value="P:lactate metabolic process"/>
    <property type="evidence" value="ECO:0000314"/>
    <property type="project" value="RGD"/>
</dbReference>
<dbReference type="GO" id="GO:0032024">
    <property type="term" value="P:positive regulation of insulin secretion"/>
    <property type="evidence" value="ECO:0000314"/>
    <property type="project" value="RGD"/>
</dbReference>
<dbReference type="GO" id="GO:0006090">
    <property type="term" value="P:pyruvate metabolic process"/>
    <property type="evidence" value="ECO:0000314"/>
    <property type="project" value="RGD"/>
</dbReference>
<dbReference type="GO" id="GO:0009749">
    <property type="term" value="P:response to glucose"/>
    <property type="evidence" value="ECO:0000314"/>
    <property type="project" value="RGD"/>
</dbReference>
<dbReference type="CDD" id="cd07067">
    <property type="entry name" value="HP_PGM_like"/>
    <property type="match status" value="1"/>
</dbReference>
<dbReference type="FunFam" id="3.40.50.1240:FF:000001">
    <property type="entry name" value="6-phosphofructo-2-kinase/fructose-2, 6-bisphosphatase 3 isoform 2"/>
    <property type="match status" value="1"/>
</dbReference>
<dbReference type="FunFam" id="3.40.50.300:FF:000047">
    <property type="entry name" value="6-phosphofructo-2-kinase/fructose-2, 6-bisphosphatase 3 isoform 2"/>
    <property type="match status" value="1"/>
</dbReference>
<dbReference type="Gene3D" id="3.40.50.300">
    <property type="entry name" value="P-loop containing nucleotide triphosphate hydrolases"/>
    <property type="match status" value="1"/>
</dbReference>
<dbReference type="Gene3D" id="3.40.50.1240">
    <property type="entry name" value="Phosphoglycerate mutase-like"/>
    <property type="match status" value="1"/>
</dbReference>
<dbReference type="InterPro" id="IPR003094">
    <property type="entry name" value="6Pfruct_kin"/>
</dbReference>
<dbReference type="InterPro" id="IPR013079">
    <property type="entry name" value="6Phosfructo_kin"/>
</dbReference>
<dbReference type="InterPro" id="IPR013078">
    <property type="entry name" value="His_Pase_superF_clade-1"/>
</dbReference>
<dbReference type="InterPro" id="IPR029033">
    <property type="entry name" value="His_PPase_superfam"/>
</dbReference>
<dbReference type="InterPro" id="IPR027417">
    <property type="entry name" value="P-loop_NTPase"/>
</dbReference>
<dbReference type="InterPro" id="IPR001345">
    <property type="entry name" value="PG/BPGM_mutase_AS"/>
</dbReference>
<dbReference type="PANTHER" id="PTHR10606">
    <property type="entry name" value="6-PHOSPHOFRUCTO-2-KINASE/FRUCTOSE-2,6-BISPHOSPHATASE"/>
    <property type="match status" value="1"/>
</dbReference>
<dbReference type="PANTHER" id="PTHR10606:SF48">
    <property type="entry name" value="6-PHOSPHOFRUCTO-2-KINASE_FRUCTOSE-2,6-BISPHOSPHATASE 2"/>
    <property type="match status" value="1"/>
</dbReference>
<dbReference type="Pfam" id="PF01591">
    <property type="entry name" value="6PF2K"/>
    <property type="match status" value="1"/>
</dbReference>
<dbReference type="Pfam" id="PF00300">
    <property type="entry name" value="His_Phos_1"/>
    <property type="match status" value="1"/>
</dbReference>
<dbReference type="PRINTS" id="PR00991">
    <property type="entry name" value="6PFRUCTKNASE"/>
</dbReference>
<dbReference type="SMART" id="SM00855">
    <property type="entry name" value="PGAM"/>
    <property type="match status" value="1"/>
</dbReference>
<dbReference type="SUPFAM" id="SSF52540">
    <property type="entry name" value="P-loop containing nucleoside triphosphate hydrolases"/>
    <property type="match status" value="1"/>
</dbReference>
<dbReference type="SUPFAM" id="SSF53254">
    <property type="entry name" value="Phosphoglycerate mutase-like"/>
    <property type="match status" value="1"/>
</dbReference>
<dbReference type="PROSITE" id="PS00175">
    <property type="entry name" value="PG_MUTASE"/>
    <property type="match status" value="1"/>
</dbReference>
<name>F262_RAT</name>
<reference key="1">
    <citation type="journal article" date="1994" name="Biochem. Biophys. Res. Commun.">
        <title>Molecular cloning and tissue specific expression of fructose 6-phosphate,2-kinase:fructose 2,6-bisphosphatase of rat brain.</title>
        <authorList>
            <person name="Watanabe F."/>
            <person name="Sakai A."/>
            <person name="Furuya E."/>
            <person name="Uyeda K."/>
        </authorList>
    </citation>
    <scope>NUCLEOTIDE SEQUENCE [MRNA]</scope>
    <source>
        <strain>Sprague-Dawley</strain>
        <tissue>Brain</tissue>
    </source>
</reference>
<reference key="2">
    <citation type="submission" date="2000-03" db="EMBL/GenBank/DDBJ databases">
        <title>New isoforms of rat heart-type fructose 6-phosphate 2-kinase/fructose 2,6-bisphosphatase are generated by alternative splicing of novel exons.</title>
        <authorList>
            <person name="Watanabe F."/>
            <person name="Furuya E."/>
        </authorList>
    </citation>
    <scope>NUCLEOTIDE SEQUENCE [MRNA]</scope>
    <scope>ALTERNATIVE SPLICING</scope>
    <source>
        <strain>Sprague-Dawley</strain>
    </source>
</reference>
<reference key="3">
    <citation type="journal article" date="2012" name="Nat. Commun.">
        <title>Quantitative maps of protein phosphorylation sites across 14 different rat organs and tissues.</title>
        <authorList>
            <person name="Lundby A."/>
            <person name="Secher A."/>
            <person name="Lage K."/>
            <person name="Nordsborg N.B."/>
            <person name="Dmytriyev A."/>
            <person name="Lundby C."/>
            <person name="Olsen J.V."/>
        </authorList>
    </citation>
    <scope>PHOSPHORYLATION [LARGE SCALE ANALYSIS] AT SER-469 AND SER-486</scope>
    <scope>IDENTIFICATION BY MASS SPECTROMETRY [LARGE SCALE ANALYSIS]</scope>
</reference>
<accession>Q9JJH5</accession>
<accession>Q64297</accession>
<accession>Q9JHL5</accession>
<accession>Q9JJH4</accession>
<organism>
    <name type="scientific">Rattus norvegicus</name>
    <name type="common">Rat</name>
    <dbReference type="NCBI Taxonomy" id="10116"/>
    <lineage>
        <taxon>Eukaryota</taxon>
        <taxon>Metazoa</taxon>
        <taxon>Chordata</taxon>
        <taxon>Craniata</taxon>
        <taxon>Vertebrata</taxon>
        <taxon>Euteleostomi</taxon>
        <taxon>Mammalia</taxon>
        <taxon>Eutheria</taxon>
        <taxon>Euarchontoglires</taxon>
        <taxon>Glires</taxon>
        <taxon>Rodentia</taxon>
        <taxon>Myomorpha</taxon>
        <taxon>Muroidea</taxon>
        <taxon>Muridae</taxon>
        <taxon>Murinae</taxon>
        <taxon>Rattus</taxon>
    </lineage>
</organism>
<gene>
    <name type="primary">Pfkfb2</name>
</gene>
<keyword id="KW-0007">Acetylation</keyword>
<keyword id="KW-0025">Alternative splicing</keyword>
<keyword id="KW-0067">ATP-binding</keyword>
<keyword id="KW-0378">Hydrolase</keyword>
<keyword id="KW-0418">Kinase</keyword>
<keyword id="KW-0511">Multifunctional enzyme</keyword>
<keyword id="KW-0547">Nucleotide-binding</keyword>
<keyword id="KW-0597">Phosphoprotein</keyword>
<keyword id="KW-1185">Reference proteome</keyword>
<keyword id="KW-0808">Transferase</keyword>
<proteinExistence type="evidence at protein level"/>